<name>CS2_COFCA</name>
<accession>A0A096VHX1</accession>
<gene>
    <name evidence="5" type="primary">MTL2</name>
</gene>
<organism>
    <name type="scientific">Coffea canephora</name>
    <name type="common">Robusta coffee</name>
    <dbReference type="NCBI Taxonomy" id="49390"/>
    <lineage>
        <taxon>Eukaryota</taxon>
        <taxon>Viridiplantae</taxon>
        <taxon>Streptophyta</taxon>
        <taxon>Embryophyta</taxon>
        <taxon>Tracheophyta</taxon>
        <taxon>Spermatophyta</taxon>
        <taxon>Magnoliopsida</taxon>
        <taxon>eudicotyledons</taxon>
        <taxon>Gunneridae</taxon>
        <taxon>Pentapetalae</taxon>
        <taxon>asterids</taxon>
        <taxon>lamiids</taxon>
        <taxon>Gentianales</taxon>
        <taxon>Rubiaceae</taxon>
        <taxon>Ixoroideae</taxon>
        <taxon>Gardenieae complex</taxon>
        <taxon>Bertiereae - Coffeeae clade</taxon>
        <taxon>Coffeeae</taxon>
        <taxon>Coffea</taxon>
    </lineage>
</organism>
<sequence>MELQEVLHMNGGEGDTSYAKNSSYNQLVLTKVKPVLEQCIRELLRANLPNINKCIKVADLGCASGPNTLLTVRDIVQSIDKVGQEEKNELEHPTIQIFLNDLFQNDFNSVFKLLPSFYRKLEKENGRKIGSCLISAMPGSFYGRLFPEESMHFLHSCYSVHWLSQVPSGLVTELGISANKGIIYSSKASPPPVQKAYLDQFTKDFTTFLRIHSEELLSGGRMLLTCICKGDESDGLNTIDLLERAINDLVVEGLLEEEKLDSFNLPLYTPSLEVVKCIVEEEGSFEILYLETFKVRYDAGFSIDDDYQVRSLFQVYCDEHVKAAYVTFFFRAVFEPILASHFGEAIMPDLFHRFAKNAAKALRLGNGFYNSLIISLAKKPEKSDV</sequence>
<reference key="1">
    <citation type="journal article" date="2015" name="Planta">
        <title>Differential regulation of caffeine metabolism in Coffea arabica (Arabica) and Coffea canephora (Robusta).</title>
        <authorList>
            <person name="Perrois C."/>
            <person name="Strickler S.R."/>
            <person name="Mathieu G."/>
            <person name="Lepelley M."/>
            <person name="Bedon L."/>
            <person name="Michaux S."/>
            <person name="Husson J."/>
            <person name="Mueller L."/>
            <person name="Privat I."/>
        </authorList>
    </citation>
    <scope>NUCLEOTIDE SEQUENCE [GENOMIC DNA]</scope>
    <scope>GENE FAMILY</scope>
    <scope>NOMENCLATURE</scope>
    <source>
        <strain>cv. DH200-94</strain>
    </source>
</reference>
<dbReference type="EC" id="2.1.1.-" evidence="2"/>
<dbReference type="EMBL" id="JX978508">
    <property type="protein sequence ID" value="AFV60436.1"/>
    <property type="molecule type" value="Genomic_DNA"/>
</dbReference>
<dbReference type="SMR" id="A0A096VHX1"/>
<dbReference type="GO" id="GO:0046872">
    <property type="term" value="F:metal ion binding"/>
    <property type="evidence" value="ECO:0007669"/>
    <property type="project" value="UniProtKB-KW"/>
</dbReference>
<dbReference type="GO" id="GO:0008168">
    <property type="term" value="F:methyltransferase activity"/>
    <property type="evidence" value="ECO:0007669"/>
    <property type="project" value="UniProtKB-KW"/>
</dbReference>
<dbReference type="GO" id="GO:0032259">
    <property type="term" value="P:methylation"/>
    <property type="evidence" value="ECO:0007669"/>
    <property type="project" value="UniProtKB-KW"/>
</dbReference>
<dbReference type="Gene3D" id="1.10.1200.270">
    <property type="entry name" value="Methyltransferase, alpha-helical capping domain"/>
    <property type="match status" value="1"/>
</dbReference>
<dbReference type="Gene3D" id="3.40.50.150">
    <property type="entry name" value="Vaccinia Virus protein VP39"/>
    <property type="match status" value="1"/>
</dbReference>
<dbReference type="InterPro" id="IPR005299">
    <property type="entry name" value="MeTrfase_7"/>
</dbReference>
<dbReference type="InterPro" id="IPR042086">
    <property type="entry name" value="MeTrfase_capping"/>
</dbReference>
<dbReference type="InterPro" id="IPR029063">
    <property type="entry name" value="SAM-dependent_MTases_sf"/>
</dbReference>
<dbReference type="PANTHER" id="PTHR31009">
    <property type="entry name" value="S-ADENOSYL-L-METHIONINE:CARBOXYL METHYLTRANSFERASE FAMILY PROTEIN"/>
    <property type="match status" value="1"/>
</dbReference>
<dbReference type="Pfam" id="PF03492">
    <property type="entry name" value="Methyltransf_7"/>
    <property type="match status" value="1"/>
</dbReference>
<dbReference type="SUPFAM" id="SSF53335">
    <property type="entry name" value="S-adenosyl-L-methionine-dependent methyltransferases"/>
    <property type="match status" value="1"/>
</dbReference>
<comment type="function">
    <text evidence="2">May be involved in the biosynthesis of caffeine.</text>
</comment>
<comment type="cofactor">
    <cofactor evidence="3">
        <name>Mg(2+)</name>
        <dbReference type="ChEBI" id="CHEBI:18420"/>
    </cofactor>
    <text evidence="3">Binds 1 Mg(2+) ion per subunit.</text>
</comment>
<comment type="pathway">
    <text evidence="2">Alkaloid biosynthesis.</text>
</comment>
<comment type="similarity">
    <text evidence="6">Belongs to the methyltransferase superfamily. Type-7 methyltransferase family.</text>
</comment>
<protein>
    <recommendedName>
        <fullName evidence="6">Probable caffeine synthase MTL2</fullName>
        <ecNumber evidence="2">2.1.1.-</ecNumber>
    </recommendedName>
    <alternativeName>
        <fullName evidence="5">Methyltransferase-like 2</fullName>
        <shortName evidence="5">CcMTL2</shortName>
    </alternativeName>
</protein>
<keyword id="KW-0460">Magnesium</keyword>
<keyword id="KW-0479">Metal-binding</keyword>
<keyword id="KW-0489">Methyltransferase</keyword>
<keyword id="KW-0808">Transferase</keyword>
<feature type="chain" id="PRO_0000451793" description="Probable caffeine synthase MTL2">
    <location>
        <begin position="1"/>
        <end position="385"/>
    </location>
</feature>
<feature type="binding site" evidence="2">
    <location>
        <position position="18"/>
    </location>
    <ligand>
        <name>S-adenosyl-L-homocysteine</name>
        <dbReference type="ChEBI" id="CHEBI:57856"/>
    </ligand>
</feature>
<feature type="binding site" evidence="2">
    <location>
        <position position="62"/>
    </location>
    <ligand>
        <name>S-adenosyl-L-homocysteine</name>
        <dbReference type="ChEBI" id="CHEBI:57856"/>
    </ligand>
</feature>
<feature type="binding site" evidence="2">
    <location>
        <position position="67"/>
    </location>
    <ligand>
        <name>S-adenosyl-L-homocysteine</name>
        <dbReference type="ChEBI" id="CHEBI:57856"/>
    </ligand>
</feature>
<feature type="binding site" evidence="2">
    <location>
        <position position="101"/>
    </location>
    <ligand>
        <name>S-adenosyl-L-homocysteine</name>
        <dbReference type="ChEBI" id="CHEBI:57856"/>
    </ligand>
</feature>
<feature type="binding site" evidence="2">
    <location>
        <position position="102"/>
    </location>
    <ligand>
        <name>S-adenosyl-L-homocysteine</name>
        <dbReference type="ChEBI" id="CHEBI:57856"/>
    </ligand>
</feature>
<feature type="binding site" evidence="2">
    <location>
        <position position="140"/>
    </location>
    <ligand>
        <name>S-adenosyl-L-homocysteine</name>
        <dbReference type="ChEBI" id="CHEBI:57856"/>
    </ligand>
</feature>
<feature type="binding site" evidence="2">
    <location>
        <position position="141"/>
    </location>
    <ligand>
        <name>S-adenosyl-L-homocysteine</name>
        <dbReference type="ChEBI" id="CHEBI:57856"/>
    </ligand>
</feature>
<feature type="binding site" evidence="1">
    <location>
        <position position="157"/>
    </location>
    <ligand>
        <name>S-adenosyl-L-homocysteine</name>
        <dbReference type="ChEBI" id="CHEBI:57856"/>
    </ligand>
</feature>
<feature type="binding site" evidence="2">
    <location>
        <position position="158"/>
    </location>
    <ligand>
        <name>caffeine</name>
        <dbReference type="ChEBI" id="CHEBI:27732"/>
    </ligand>
</feature>
<feature type="binding site" evidence="2">
    <location>
        <position position="161"/>
    </location>
    <ligand>
        <name>caffeine</name>
        <dbReference type="ChEBI" id="CHEBI:27732"/>
    </ligand>
</feature>
<feature type="binding site" evidence="2">
    <location>
        <position position="162"/>
    </location>
    <ligand>
        <name>caffeine</name>
        <dbReference type="ChEBI" id="CHEBI:27732"/>
    </ligand>
</feature>
<feature type="binding site" evidence="3">
    <location>
        <position position="179"/>
    </location>
    <ligand>
        <name>Mg(2+)</name>
        <dbReference type="ChEBI" id="CHEBI:18420"/>
    </ligand>
</feature>
<feature type="binding site" evidence="2">
    <location>
        <position position="238"/>
    </location>
    <ligand>
        <name>caffeine</name>
        <dbReference type="ChEBI" id="CHEBI:27732"/>
    </ligand>
</feature>
<feature type="binding site" evidence="3">
    <location>
        <position position="261"/>
    </location>
    <ligand>
        <name>Mg(2+)</name>
        <dbReference type="ChEBI" id="CHEBI:18420"/>
    </ligand>
</feature>
<feature type="binding site" evidence="3">
    <location>
        <position position="263"/>
    </location>
    <ligand>
        <name>Mg(2+)</name>
        <dbReference type="ChEBI" id="CHEBI:18420"/>
    </ligand>
</feature>
<feature type="binding site" evidence="3">
    <location>
        <position position="264"/>
    </location>
    <ligand>
        <name>Mg(2+)</name>
        <dbReference type="ChEBI" id="CHEBI:18420"/>
    </ligand>
</feature>
<feature type="binding site" evidence="2">
    <location>
        <position position="369"/>
    </location>
    <ligand>
        <name>caffeine</name>
        <dbReference type="ChEBI" id="CHEBI:27732"/>
    </ligand>
</feature>
<feature type="site" description="Involved in substrate discrimination" evidence="4">
    <location>
        <position position="155"/>
    </location>
</feature>
<feature type="site" description="Involved in substrate discrimination" evidence="4">
    <location>
        <position position="267"/>
    </location>
</feature>
<feature type="site" description="Involved in substrate discrimination" evidence="4">
    <location>
        <position position="344"/>
    </location>
</feature>
<proteinExistence type="inferred from homology"/>
<evidence type="ECO:0000250" key="1">
    <source>
        <dbReference type="UniProtKB" id="A4GE69"/>
    </source>
</evidence>
<evidence type="ECO:0000250" key="2">
    <source>
        <dbReference type="UniProtKB" id="A4GE70"/>
    </source>
</evidence>
<evidence type="ECO:0000250" key="3">
    <source>
        <dbReference type="UniProtKB" id="Q9FLN8"/>
    </source>
</evidence>
<evidence type="ECO:0000250" key="4">
    <source>
        <dbReference type="UniProtKB" id="Q9FZN8"/>
    </source>
</evidence>
<evidence type="ECO:0000303" key="5">
    <source>
    </source>
</evidence>
<evidence type="ECO:0000305" key="6"/>